<organism>
    <name type="scientific">Corynebacterium kroppenstedtii (strain DSM 44385 / JCM 11950 / CIP 105744 / CCUG 35717)</name>
    <dbReference type="NCBI Taxonomy" id="645127"/>
    <lineage>
        <taxon>Bacteria</taxon>
        <taxon>Bacillati</taxon>
        <taxon>Actinomycetota</taxon>
        <taxon>Actinomycetes</taxon>
        <taxon>Mycobacteriales</taxon>
        <taxon>Corynebacteriaceae</taxon>
        <taxon>Corynebacterium</taxon>
    </lineage>
</organism>
<feature type="chain" id="PRO_1000201984" description="Holliday junction branch migration complex subunit RuvA">
    <location>
        <begin position="1"/>
        <end position="207"/>
    </location>
</feature>
<feature type="region of interest" description="Domain I" evidence="1">
    <location>
        <begin position="1"/>
        <end position="63"/>
    </location>
</feature>
<feature type="region of interest" description="Domain II" evidence="1">
    <location>
        <begin position="64"/>
        <end position="142"/>
    </location>
</feature>
<feature type="region of interest" description="Flexible linker" evidence="1">
    <location>
        <begin position="143"/>
        <end position="154"/>
    </location>
</feature>
<feature type="region of interest" description="Domain III" evidence="1">
    <location>
        <begin position="155"/>
        <end position="207"/>
    </location>
</feature>
<sequence length="207" mass="21986">MIDSLHGEVLHVGLNYVVIECSGVGYRATASPSLLGTLRKGEDARILVTMNVRDDGIDLYAFESDEARQMFAMLRKVSGVGPTSAMAICSIFKPDEFARIITDEDDAELRNVKGIGKRTAERIIVDLKSKVAVFDSGDSASEPQSGVGGNSEAEVDSGVVGTVTQALVELGFPEKQAEKTATSAAAEGGSVSEILKRALRSMSSERN</sequence>
<keyword id="KW-0963">Cytoplasm</keyword>
<keyword id="KW-0227">DNA damage</keyword>
<keyword id="KW-0233">DNA recombination</keyword>
<keyword id="KW-0234">DNA repair</keyword>
<keyword id="KW-0238">DNA-binding</keyword>
<keyword id="KW-1185">Reference proteome</keyword>
<evidence type="ECO:0000255" key="1">
    <source>
        <dbReference type="HAMAP-Rule" id="MF_00031"/>
    </source>
</evidence>
<gene>
    <name evidence="1" type="primary">ruvA</name>
    <name type="ordered locus">ckrop_1030</name>
</gene>
<comment type="function">
    <text evidence="1">The RuvA-RuvB-RuvC complex processes Holliday junction (HJ) DNA during genetic recombination and DNA repair, while the RuvA-RuvB complex plays an important role in the rescue of blocked DNA replication forks via replication fork reversal (RFR). RuvA specifically binds to HJ cruciform DNA, conferring on it an open structure. The RuvB hexamer acts as an ATP-dependent pump, pulling dsDNA into and through the RuvAB complex. HJ branch migration allows RuvC to scan DNA until it finds its consensus sequence, where it cleaves and resolves the cruciform DNA.</text>
</comment>
<comment type="subunit">
    <text evidence="1">Homotetramer. Forms an RuvA(8)-RuvB(12)-Holliday junction (HJ) complex. HJ DNA is sandwiched between 2 RuvA tetramers; dsDNA enters through RuvA and exits via RuvB. An RuvB hexamer assembles on each DNA strand where it exits the tetramer. Each RuvB hexamer is contacted by two RuvA subunits (via domain III) on 2 adjacent RuvB subunits; this complex drives branch migration. In the full resolvosome a probable DNA-RuvA(4)-RuvB(12)-RuvC(2) complex forms which resolves the HJ.</text>
</comment>
<comment type="subcellular location">
    <subcellularLocation>
        <location evidence="1">Cytoplasm</location>
    </subcellularLocation>
</comment>
<comment type="domain">
    <text evidence="1">Has three domains with a flexible linker between the domains II and III and assumes an 'L' shape. Domain III is highly mobile and contacts RuvB.</text>
</comment>
<comment type="similarity">
    <text evidence="1">Belongs to the RuvA family.</text>
</comment>
<protein>
    <recommendedName>
        <fullName evidence="1">Holliday junction branch migration complex subunit RuvA</fullName>
    </recommendedName>
</protein>
<proteinExistence type="inferred from homology"/>
<accession>C4LIX8</accession>
<name>RUVA_CORK4</name>
<reference key="1">
    <citation type="journal article" date="2008" name="J. Biotechnol.">
        <title>Ultrafast pyrosequencing of Corynebacterium kroppenstedtii DSM44385 revealed insights into the physiology of a lipophilic corynebacterium that lacks mycolic acids.</title>
        <authorList>
            <person name="Tauch A."/>
            <person name="Schneider J."/>
            <person name="Szczepanowski R."/>
            <person name="Tilker A."/>
            <person name="Viehoever P."/>
            <person name="Gartemann K.-H."/>
            <person name="Arnold W."/>
            <person name="Blom J."/>
            <person name="Brinkrolf K."/>
            <person name="Brune I."/>
            <person name="Goetker S."/>
            <person name="Weisshaar B."/>
            <person name="Goesmann A."/>
            <person name="Droege M."/>
            <person name="Puehler A."/>
        </authorList>
    </citation>
    <scope>NUCLEOTIDE SEQUENCE [LARGE SCALE GENOMIC DNA]</scope>
    <source>
        <strain>DSM 44385 / JCM 11950 / CIP 105744 / CCUG 35717</strain>
    </source>
</reference>
<dbReference type="EMBL" id="CP001620">
    <property type="protein sequence ID" value="ACR17783.1"/>
    <property type="molecule type" value="Genomic_DNA"/>
</dbReference>
<dbReference type="RefSeq" id="WP_012731670.1">
    <property type="nucleotide sequence ID" value="NC_012704.1"/>
</dbReference>
<dbReference type="SMR" id="C4LIX8"/>
<dbReference type="STRING" id="645127.ckrop_1030"/>
<dbReference type="KEGG" id="ckp:ckrop_1030"/>
<dbReference type="eggNOG" id="COG0632">
    <property type="taxonomic scope" value="Bacteria"/>
</dbReference>
<dbReference type="HOGENOM" id="CLU_087936_2_1_11"/>
<dbReference type="OrthoDB" id="5293449at2"/>
<dbReference type="Proteomes" id="UP000001473">
    <property type="component" value="Chromosome"/>
</dbReference>
<dbReference type="GO" id="GO:0005737">
    <property type="term" value="C:cytoplasm"/>
    <property type="evidence" value="ECO:0007669"/>
    <property type="project" value="UniProtKB-SubCell"/>
</dbReference>
<dbReference type="GO" id="GO:0009379">
    <property type="term" value="C:Holliday junction helicase complex"/>
    <property type="evidence" value="ECO:0007669"/>
    <property type="project" value="InterPro"/>
</dbReference>
<dbReference type="GO" id="GO:0048476">
    <property type="term" value="C:Holliday junction resolvase complex"/>
    <property type="evidence" value="ECO:0007669"/>
    <property type="project" value="UniProtKB-UniRule"/>
</dbReference>
<dbReference type="GO" id="GO:0005524">
    <property type="term" value="F:ATP binding"/>
    <property type="evidence" value="ECO:0007669"/>
    <property type="project" value="InterPro"/>
</dbReference>
<dbReference type="GO" id="GO:0000400">
    <property type="term" value="F:four-way junction DNA binding"/>
    <property type="evidence" value="ECO:0007669"/>
    <property type="project" value="UniProtKB-UniRule"/>
</dbReference>
<dbReference type="GO" id="GO:0009378">
    <property type="term" value="F:four-way junction helicase activity"/>
    <property type="evidence" value="ECO:0007669"/>
    <property type="project" value="InterPro"/>
</dbReference>
<dbReference type="GO" id="GO:0006310">
    <property type="term" value="P:DNA recombination"/>
    <property type="evidence" value="ECO:0007669"/>
    <property type="project" value="UniProtKB-UniRule"/>
</dbReference>
<dbReference type="GO" id="GO:0006281">
    <property type="term" value="P:DNA repair"/>
    <property type="evidence" value="ECO:0007669"/>
    <property type="project" value="UniProtKB-UniRule"/>
</dbReference>
<dbReference type="CDD" id="cd14332">
    <property type="entry name" value="UBA_RuvA_C"/>
    <property type="match status" value="1"/>
</dbReference>
<dbReference type="Gene3D" id="1.10.150.20">
    <property type="entry name" value="5' to 3' exonuclease, C-terminal subdomain"/>
    <property type="match status" value="1"/>
</dbReference>
<dbReference type="Gene3D" id="1.10.8.10">
    <property type="entry name" value="DNA helicase RuvA subunit, C-terminal domain"/>
    <property type="match status" value="1"/>
</dbReference>
<dbReference type="Gene3D" id="2.40.50.140">
    <property type="entry name" value="Nucleic acid-binding proteins"/>
    <property type="match status" value="1"/>
</dbReference>
<dbReference type="HAMAP" id="MF_00031">
    <property type="entry name" value="DNA_HJ_migration_RuvA"/>
    <property type="match status" value="1"/>
</dbReference>
<dbReference type="InterPro" id="IPR013849">
    <property type="entry name" value="DNA_helicase_Holl-junc_RuvA_I"/>
</dbReference>
<dbReference type="InterPro" id="IPR003583">
    <property type="entry name" value="Hlx-hairpin-Hlx_DNA-bd_motif"/>
</dbReference>
<dbReference type="InterPro" id="IPR012340">
    <property type="entry name" value="NA-bd_OB-fold"/>
</dbReference>
<dbReference type="InterPro" id="IPR000085">
    <property type="entry name" value="RuvA"/>
</dbReference>
<dbReference type="InterPro" id="IPR010994">
    <property type="entry name" value="RuvA_2-like"/>
</dbReference>
<dbReference type="InterPro" id="IPR011114">
    <property type="entry name" value="RuvA_C"/>
</dbReference>
<dbReference type="InterPro" id="IPR036267">
    <property type="entry name" value="RuvA_C_sf"/>
</dbReference>
<dbReference type="NCBIfam" id="TIGR00084">
    <property type="entry name" value="ruvA"/>
    <property type="match status" value="1"/>
</dbReference>
<dbReference type="Pfam" id="PF14520">
    <property type="entry name" value="HHH_5"/>
    <property type="match status" value="1"/>
</dbReference>
<dbReference type="Pfam" id="PF07499">
    <property type="entry name" value="RuvA_C"/>
    <property type="match status" value="1"/>
</dbReference>
<dbReference type="Pfam" id="PF01330">
    <property type="entry name" value="RuvA_N"/>
    <property type="match status" value="1"/>
</dbReference>
<dbReference type="SMART" id="SM00278">
    <property type="entry name" value="HhH1"/>
    <property type="match status" value="2"/>
</dbReference>
<dbReference type="SUPFAM" id="SSF46929">
    <property type="entry name" value="DNA helicase RuvA subunit, C-terminal domain"/>
    <property type="match status" value="1"/>
</dbReference>
<dbReference type="SUPFAM" id="SSF50249">
    <property type="entry name" value="Nucleic acid-binding proteins"/>
    <property type="match status" value="1"/>
</dbReference>
<dbReference type="SUPFAM" id="SSF47781">
    <property type="entry name" value="RuvA domain 2-like"/>
    <property type="match status" value="1"/>
</dbReference>